<keyword id="KW-0066">ATP synthesis</keyword>
<keyword id="KW-0997">Cell inner membrane</keyword>
<keyword id="KW-1003">Cell membrane</keyword>
<keyword id="KW-0139">CF(1)</keyword>
<keyword id="KW-0375">Hydrogen ion transport</keyword>
<keyword id="KW-0406">Ion transport</keyword>
<keyword id="KW-0472">Membrane</keyword>
<keyword id="KW-0813">Transport</keyword>
<comment type="function">
    <text evidence="1">Produces ATP from ADP in the presence of a proton gradient across the membrane.</text>
</comment>
<comment type="subunit">
    <text>F-type ATPases have 2 components, CF(1) - the catalytic core - and CF(0) - the membrane proton channel. CF(1) has five subunits: alpha(3), beta(3), gamma(1), delta(1), epsilon(1). CF(0) has three main subunits: a, b and c.</text>
</comment>
<comment type="subcellular location">
    <subcellularLocation>
        <location evidence="1">Cell inner membrane</location>
        <topology evidence="1">Peripheral membrane protein</topology>
    </subcellularLocation>
</comment>
<comment type="similarity">
    <text evidence="1">Belongs to the ATPase epsilon chain family.</text>
</comment>
<feature type="chain" id="PRO_0000265815" description="ATP synthase epsilon chain">
    <location>
        <begin position="1"/>
        <end position="145"/>
    </location>
</feature>
<name>ATPE_FRAT1</name>
<proteinExistence type="inferred from homology"/>
<reference key="1">
    <citation type="journal article" date="2007" name="PLoS ONE">
        <title>Genome sequencing shows that European isolates of Francisella tularensis subspecies tularensis are almost identical to US laboratory strain Schu S4.</title>
        <authorList>
            <person name="Chaudhuri R.R."/>
            <person name="Ren C.-P."/>
            <person name="Desmond L."/>
            <person name="Vincent G.A."/>
            <person name="Silman N.J."/>
            <person name="Brehm J.K."/>
            <person name="Elmore M.J."/>
            <person name="Hudson M.J."/>
            <person name="Forsman M."/>
            <person name="Isherwood K.E."/>
            <person name="Gurycova D."/>
            <person name="Minton N.P."/>
            <person name="Titball R.W."/>
            <person name="Pallen M.J."/>
            <person name="Vipond R."/>
        </authorList>
    </citation>
    <scope>NUCLEOTIDE SEQUENCE [LARGE SCALE GENOMIC DNA]</scope>
    <source>
        <strain>FSC 198</strain>
    </source>
</reference>
<sequence length="145" mass="15767">MTKKYLKVDVVSPLGSVFKGEADMVSLRGSAGEMGIAYGHTELLSTLPAGVVNVRKDQHTDVLYVSGGIVEVTPTRVTIMVDDMERAENLNQAEAEKARARAKEVLKNPDASKLDIEAANKRLKEADARLKALNSSNGLYYSKDD</sequence>
<organism>
    <name type="scientific">Francisella tularensis subsp. tularensis (strain FSC 198)</name>
    <dbReference type="NCBI Taxonomy" id="393115"/>
    <lineage>
        <taxon>Bacteria</taxon>
        <taxon>Pseudomonadati</taxon>
        <taxon>Pseudomonadota</taxon>
        <taxon>Gammaproteobacteria</taxon>
        <taxon>Thiotrichales</taxon>
        <taxon>Francisellaceae</taxon>
        <taxon>Francisella</taxon>
    </lineage>
</organism>
<dbReference type="EMBL" id="AM286280">
    <property type="protein sequence ID" value="CAL08081.1"/>
    <property type="molecule type" value="Genomic_DNA"/>
</dbReference>
<dbReference type="RefSeq" id="WP_003019771.1">
    <property type="nucleotide sequence ID" value="NC_008245.1"/>
</dbReference>
<dbReference type="SMR" id="Q14K05"/>
<dbReference type="KEGG" id="ftf:FTF0065"/>
<dbReference type="HOGENOM" id="CLU_084338_2_1_6"/>
<dbReference type="GO" id="GO:0005886">
    <property type="term" value="C:plasma membrane"/>
    <property type="evidence" value="ECO:0007669"/>
    <property type="project" value="UniProtKB-SubCell"/>
</dbReference>
<dbReference type="GO" id="GO:0045259">
    <property type="term" value="C:proton-transporting ATP synthase complex"/>
    <property type="evidence" value="ECO:0007669"/>
    <property type="project" value="UniProtKB-KW"/>
</dbReference>
<dbReference type="GO" id="GO:0005524">
    <property type="term" value="F:ATP binding"/>
    <property type="evidence" value="ECO:0007669"/>
    <property type="project" value="UniProtKB-UniRule"/>
</dbReference>
<dbReference type="GO" id="GO:0046933">
    <property type="term" value="F:proton-transporting ATP synthase activity, rotational mechanism"/>
    <property type="evidence" value="ECO:0007669"/>
    <property type="project" value="UniProtKB-UniRule"/>
</dbReference>
<dbReference type="CDD" id="cd12152">
    <property type="entry name" value="F1-ATPase_delta"/>
    <property type="match status" value="1"/>
</dbReference>
<dbReference type="Gene3D" id="2.60.15.10">
    <property type="entry name" value="F0F1 ATP synthase delta/epsilon subunit, N-terminal"/>
    <property type="match status" value="1"/>
</dbReference>
<dbReference type="HAMAP" id="MF_00530">
    <property type="entry name" value="ATP_synth_epsil_bac"/>
    <property type="match status" value="1"/>
</dbReference>
<dbReference type="InterPro" id="IPR001469">
    <property type="entry name" value="ATP_synth_F1_dsu/esu"/>
</dbReference>
<dbReference type="InterPro" id="IPR020546">
    <property type="entry name" value="ATP_synth_F1_dsu/esu_N"/>
</dbReference>
<dbReference type="InterPro" id="IPR036771">
    <property type="entry name" value="ATPsynth_dsu/esu_N"/>
</dbReference>
<dbReference type="NCBIfam" id="TIGR01216">
    <property type="entry name" value="ATP_synt_epsi"/>
    <property type="match status" value="1"/>
</dbReference>
<dbReference type="NCBIfam" id="NF009986">
    <property type="entry name" value="PRK13452.1"/>
    <property type="match status" value="1"/>
</dbReference>
<dbReference type="PANTHER" id="PTHR13822">
    <property type="entry name" value="ATP SYNTHASE DELTA/EPSILON CHAIN"/>
    <property type="match status" value="1"/>
</dbReference>
<dbReference type="PANTHER" id="PTHR13822:SF10">
    <property type="entry name" value="ATP SYNTHASE EPSILON CHAIN, CHLOROPLASTIC"/>
    <property type="match status" value="1"/>
</dbReference>
<dbReference type="Pfam" id="PF02823">
    <property type="entry name" value="ATP-synt_DE_N"/>
    <property type="match status" value="1"/>
</dbReference>
<dbReference type="SUPFAM" id="SSF51344">
    <property type="entry name" value="Epsilon subunit of F1F0-ATP synthase N-terminal domain"/>
    <property type="match status" value="1"/>
</dbReference>
<gene>
    <name evidence="1" type="primary">atpC</name>
    <name type="ordered locus">FTF0065</name>
</gene>
<accession>Q14K05</accession>
<evidence type="ECO:0000255" key="1">
    <source>
        <dbReference type="HAMAP-Rule" id="MF_00530"/>
    </source>
</evidence>
<protein>
    <recommendedName>
        <fullName evidence="1">ATP synthase epsilon chain</fullName>
    </recommendedName>
    <alternativeName>
        <fullName evidence="1">ATP synthase F1 sector epsilon subunit</fullName>
    </alternativeName>
    <alternativeName>
        <fullName evidence="1">F-ATPase epsilon subunit</fullName>
    </alternativeName>
</protein>